<reference key="1">
    <citation type="journal article" date="2005" name="Science">
        <title>The transcriptional landscape of the mammalian genome.</title>
        <authorList>
            <person name="Carninci P."/>
            <person name="Kasukawa T."/>
            <person name="Katayama S."/>
            <person name="Gough J."/>
            <person name="Frith M.C."/>
            <person name="Maeda N."/>
            <person name="Oyama R."/>
            <person name="Ravasi T."/>
            <person name="Lenhard B."/>
            <person name="Wells C."/>
            <person name="Kodzius R."/>
            <person name="Shimokawa K."/>
            <person name="Bajic V.B."/>
            <person name="Brenner S.E."/>
            <person name="Batalov S."/>
            <person name="Forrest A.R."/>
            <person name="Zavolan M."/>
            <person name="Davis M.J."/>
            <person name="Wilming L.G."/>
            <person name="Aidinis V."/>
            <person name="Allen J.E."/>
            <person name="Ambesi-Impiombato A."/>
            <person name="Apweiler R."/>
            <person name="Aturaliya R.N."/>
            <person name="Bailey T.L."/>
            <person name="Bansal M."/>
            <person name="Baxter L."/>
            <person name="Beisel K.W."/>
            <person name="Bersano T."/>
            <person name="Bono H."/>
            <person name="Chalk A.M."/>
            <person name="Chiu K.P."/>
            <person name="Choudhary V."/>
            <person name="Christoffels A."/>
            <person name="Clutterbuck D.R."/>
            <person name="Crowe M.L."/>
            <person name="Dalla E."/>
            <person name="Dalrymple B.P."/>
            <person name="de Bono B."/>
            <person name="Della Gatta G."/>
            <person name="di Bernardo D."/>
            <person name="Down T."/>
            <person name="Engstrom P."/>
            <person name="Fagiolini M."/>
            <person name="Faulkner G."/>
            <person name="Fletcher C.F."/>
            <person name="Fukushima T."/>
            <person name="Furuno M."/>
            <person name="Futaki S."/>
            <person name="Gariboldi M."/>
            <person name="Georgii-Hemming P."/>
            <person name="Gingeras T.R."/>
            <person name="Gojobori T."/>
            <person name="Green R.E."/>
            <person name="Gustincich S."/>
            <person name="Harbers M."/>
            <person name="Hayashi Y."/>
            <person name="Hensch T.K."/>
            <person name="Hirokawa N."/>
            <person name="Hill D."/>
            <person name="Huminiecki L."/>
            <person name="Iacono M."/>
            <person name="Ikeo K."/>
            <person name="Iwama A."/>
            <person name="Ishikawa T."/>
            <person name="Jakt M."/>
            <person name="Kanapin A."/>
            <person name="Katoh M."/>
            <person name="Kawasawa Y."/>
            <person name="Kelso J."/>
            <person name="Kitamura H."/>
            <person name="Kitano H."/>
            <person name="Kollias G."/>
            <person name="Krishnan S.P."/>
            <person name="Kruger A."/>
            <person name="Kummerfeld S.K."/>
            <person name="Kurochkin I.V."/>
            <person name="Lareau L.F."/>
            <person name="Lazarevic D."/>
            <person name="Lipovich L."/>
            <person name="Liu J."/>
            <person name="Liuni S."/>
            <person name="McWilliam S."/>
            <person name="Madan Babu M."/>
            <person name="Madera M."/>
            <person name="Marchionni L."/>
            <person name="Matsuda H."/>
            <person name="Matsuzawa S."/>
            <person name="Miki H."/>
            <person name="Mignone F."/>
            <person name="Miyake S."/>
            <person name="Morris K."/>
            <person name="Mottagui-Tabar S."/>
            <person name="Mulder N."/>
            <person name="Nakano N."/>
            <person name="Nakauchi H."/>
            <person name="Ng P."/>
            <person name="Nilsson R."/>
            <person name="Nishiguchi S."/>
            <person name="Nishikawa S."/>
            <person name="Nori F."/>
            <person name="Ohara O."/>
            <person name="Okazaki Y."/>
            <person name="Orlando V."/>
            <person name="Pang K.C."/>
            <person name="Pavan W.J."/>
            <person name="Pavesi G."/>
            <person name="Pesole G."/>
            <person name="Petrovsky N."/>
            <person name="Piazza S."/>
            <person name="Reed J."/>
            <person name="Reid J.F."/>
            <person name="Ring B.Z."/>
            <person name="Ringwald M."/>
            <person name="Rost B."/>
            <person name="Ruan Y."/>
            <person name="Salzberg S.L."/>
            <person name="Sandelin A."/>
            <person name="Schneider C."/>
            <person name="Schoenbach C."/>
            <person name="Sekiguchi K."/>
            <person name="Semple C.A."/>
            <person name="Seno S."/>
            <person name="Sessa L."/>
            <person name="Sheng Y."/>
            <person name="Shibata Y."/>
            <person name="Shimada H."/>
            <person name="Shimada K."/>
            <person name="Silva D."/>
            <person name="Sinclair B."/>
            <person name="Sperling S."/>
            <person name="Stupka E."/>
            <person name="Sugiura K."/>
            <person name="Sultana R."/>
            <person name="Takenaka Y."/>
            <person name="Taki K."/>
            <person name="Tammoja K."/>
            <person name="Tan S.L."/>
            <person name="Tang S."/>
            <person name="Taylor M.S."/>
            <person name="Tegner J."/>
            <person name="Teichmann S.A."/>
            <person name="Ueda H.R."/>
            <person name="van Nimwegen E."/>
            <person name="Verardo R."/>
            <person name="Wei C.L."/>
            <person name="Yagi K."/>
            <person name="Yamanishi H."/>
            <person name="Zabarovsky E."/>
            <person name="Zhu S."/>
            <person name="Zimmer A."/>
            <person name="Hide W."/>
            <person name="Bult C."/>
            <person name="Grimmond S.M."/>
            <person name="Teasdale R.D."/>
            <person name="Liu E.T."/>
            <person name="Brusic V."/>
            <person name="Quackenbush J."/>
            <person name="Wahlestedt C."/>
            <person name="Mattick J.S."/>
            <person name="Hume D.A."/>
            <person name="Kai C."/>
            <person name="Sasaki D."/>
            <person name="Tomaru Y."/>
            <person name="Fukuda S."/>
            <person name="Kanamori-Katayama M."/>
            <person name="Suzuki M."/>
            <person name="Aoki J."/>
            <person name="Arakawa T."/>
            <person name="Iida J."/>
            <person name="Imamura K."/>
            <person name="Itoh M."/>
            <person name="Kato T."/>
            <person name="Kawaji H."/>
            <person name="Kawagashira N."/>
            <person name="Kawashima T."/>
            <person name="Kojima M."/>
            <person name="Kondo S."/>
            <person name="Konno H."/>
            <person name="Nakano K."/>
            <person name="Ninomiya N."/>
            <person name="Nishio T."/>
            <person name="Okada M."/>
            <person name="Plessy C."/>
            <person name="Shibata K."/>
            <person name="Shiraki T."/>
            <person name="Suzuki S."/>
            <person name="Tagami M."/>
            <person name="Waki K."/>
            <person name="Watahiki A."/>
            <person name="Okamura-Oho Y."/>
            <person name="Suzuki H."/>
            <person name="Kawai J."/>
            <person name="Hayashizaki Y."/>
        </authorList>
    </citation>
    <scope>NUCLEOTIDE SEQUENCE [LARGE SCALE MRNA]</scope>
    <source>
        <strain>C57BL/6J</strain>
        <tissue>Cecum</tissue>
        <tissue>Colon</tissue>
    </source>
</reference>
<reference key="2">
    <citation type="journal article" date="2004" name="Genome Res.">
        <title>The status, quality, and expansion of the NIH full-length cDNA project: the Mammalian Gene Collection (MGC).</title>
        <authorList>
            <consortium name="The MGC Project Team"/>
        </authorList>
    </citation>
    <scope>NUCLEOTIDE SEQUENCE [LARGE SCALE MRNA]</scope>
    <source>
        <strain>FVB/N</strain>
        <tissue>Colon</tissue>
    </source>
</reference>
<sequence>MLKFYQMKYIFQILDKMRCLRKRSTVSFLGVLVVFLLFMNLYIEDSYVLEGDKQLIRETSTHQLNSERYVHTFKDLSNFSGTINVTYRYLAATPLQRKRYLTIGLSSVKRKKGNYLLDTIKSIFEQSSYEELKEISVVVHLADFNSSWRDAMVQDITQKFAHHIIAGRLMVIHAPEEYYPVLDGLKRNYNDPEDRVRFRSKQNVDYAFLLNFCANTSDYYVMLEDDVRCSRNFLTAIKKVIASLEGTYWVTLEFSKLGYIGKLYHSHDLPRLAHFLLMFYQEMPCDWLLTHFRGLLAQKNVIRFKPSLFQHMGYYSSYKGTENKLKDDDFEEESFDIPDNPPASFYTNMNVFENYEASKAYSSVDEYFWGKSPSMGDTFVIVFENPITIKKIKVNTGTEDRQNDILQHGALDVGEKLIFSKQIRQCDTYLRLGEFKNGYFEMSDVNQKIPFDIHCMRICVTKTQKEWLIIRSISIWTS</sequence>
<organism>
    <name type="scientific">Mus musculus</name>
    <name type="common">Mouse</name>
    <dbReference type="NCBI Taxonomy" id="10090"/>
    <lineage>
        <taxon>Eukaryota</taxon>
        <taxon>Metazoa</taxon>
        <taxon>Chordata</taxon>
        <taxon>Craniata</taxon>
        <taxon>Vertebrata</taxon>
        <taxon>Euteleostomi</taxon>
        <taxon>Mammalia</taxon>
        <taxon>Eutheria</taxon>
        <taxon>Euarchontoglires</taxon>
        <taxon>Glires</taxon>
        <taxon>Rodentia</taxon>
        <taxon>Myomorpha</taxon>
        <taxon>Muroidea</taxon>
        <taxon>Muridae</taxon>
        <taxon>Murinae</taxon>
        <taxon>Mus</taxon>
        <taxon>Mus</taxon>
    </lineage>
</organism>
<keyword id="KW-0325">Glycoprotein</keyword>
<keyword id="KW-0328">Glycosyltransferase</keyword>
<keyword id="KW-0333">Golgi apparatus</keyword>
<keyword id="KW-0472">Membrane</keyword>
<keyword id="KW-0479">Metal-binding</keyword>
<keyword id="KW-1185">Reference proteome</keyword>
<keyword id="KW-0735">Signal-anchor</keyword>
<keyword id="KW-0808">Transferase</keyword>
<keyword id="KW-0812">Transmembrane</keyword>
<keyword id="KW-1133">Transmembrane helix</keyword>
<dbReference type="EC" id="2.4.1.145"/>
<dbReference type="EMBL" id="AK018574">
    <property type="protein sequence ID" value="BAB31286.1"/>
    <property type="molecule type" value="mRNA"/>
</dbReference>
<dbReference type="EMBL" id="AK018672">
    <property type="protein sequence ID" value="BAB31336.1"/>
    <property type="molecule type" value="mRNA"/>
</dbReference>
<dbReference type="EMBL" id="AK033482">
    <property type="protein sequence ID" value="BAC28312.1"/>
    <property type="molecule type" value="mRNA"/>
</dbReference>
<dbReference type="EMBL" id="BC046987">
    <property type="protein sequence ID" value="AAH46987.1"/>
    <property type="molecule type" value="mRNA"/>
</dbReference>
<dbReference type="CCDS" id="CCDS24153.1"/>
<dbReference type="RefSeq" id="NP_001155840.1">
    <property type="nucleotide sequence ID" value="NM_001162368.2"/>
</dbReference>
<dbReference type="RefSeq" id="NP_001155841.1">
    <property type="nucleotide sequence ID" value="NM_001162369.2"/>
</dbReference>
<dbReference type="RefSeq" id="NP_001192027.1">
    <property type="nucleotide sequence ID" value="NM_001205098.2"/>
</dbReference>
<dbReference type="RefSeq" id="NP_001416445.1">
    <property type="nucleotide sequence ID" value="NM_001429516.1"/>
</dbReference>
<dbReference type="RefSeq" id="NP_001416446.1">
    <property type="nucleotide sequence ID" value="NM_001429517.1"/>
</dbReference>
<dbReference type="RefSeq" id="NP_080519.2">
    <property type="nucleotide sequence ID" value="NM_026243.4"/>
</dbReference>
<dbReference type="RefSeq" id="XP_006514065.1">
    <property type="nucleotide sequence ID" value="XM_006514002.1"/>
</dbReference>
<dbReference type="RefSeq" id="XP_006514066.1">
    <property type="nucleotide sequence ID" value="XM_006514003.1"/>
</dbReference>
<dbReference type="RefSeq" id="XP_006514067.1">
    <property type="nucleotide sequence ID" value="XM_006514004.4"/>
</dbReference>
<dbReference type="RefSeq" id="XP_006514068.1">
    <property type="nucleotide sequence ID" value="XM_006514005.3"/>
</dbReference>
<dbReference type="RefSeq" id="XP_011241840.1">
    <property type="nucleotide sequence ID" value="XM_011243538.4"/>
</dbReference>
<dbReference type="RefSeq" id="XP_011241841.1">
    <property type="nucleotide sequence ID" value="XM_011243539.1"/>
</dbReference>
<dbReference type="RefSeq" id="XP_030101095.1">
    <property type="nucleotide sequence ID" value="XM_030245235.1"/>
</dbReference>
<dbReference type="RefSeq" id="XP_030101096.1">
    <property type="nucleotide sequence ID" value="XM_030245236.1"/>
</dbReference>
<dbReference type="RefSeq" id="XP_036011857.1">
    <property type="nucleotide sequence ID" value="XM_036155964.1"/>
</dbReference>
<dbReference type="SMR" id="Q9D306"/>
<dbReference type="FunCoup" id="Q9D306">
    <property type="interactions" value="71"/>
</dbReference>
<dbReference type="STRING" id="10090.ENSMUSP00000135959"/>
<dbReference type="CAZy" id="GT54">
    <property type="family name" value="Glycosyltransferase Family 54"/>
</dbReference>
<dbReference type="GlyCosmos" id="Q9D306">
    <property type="glycosylation" value="2 sites, No reported glycans"/>
</dbReference>
<dbReference type="GlyGen" id="Q9D306">
    <property type="glycosylation" value="2 sites"/>
</dbReference>
<dbReference type="PhosphoSitePlus" id="Q9D306"/>
<dbReference type="PaxDb" id="10090-ENSMUSP00000020039"/>
<dbReference type="ProteomicsDB" id="295661"/>
<dbReference type="Antibodypedia" id="2664">
    <property type="antibodies" value="93 antibodies from 21 providers"/>
</dbReference>
<dbReference type="DNASU" id="67569"/>
<dbReference type="Ensembl" id="ENSMUST00000020039.13">
    <property type="protein sequence ID" value="ENSMUSP00000020039.7"/>
    <property type="gene ID" value="ENSMUSG00000019888.18"/>
</dbReference>
<dbReference type="Ensembl" id="ENSMUST00000120748.2">
    <property type="protein sequence ID" value="ENSMUSP00000114010.2"/>
    <property type="gene ID" value="ENSMUSG00000019888.18"/>
</dbReference>
<dbReference type="Ensembl" id="ENSMUST00000163753.8">
    <property type="protein sequence ID" value="ENSMUSP00000131551.2"/>
    <property type="gene ID" value="ENSMUSG00000019888.18"/>
</dbReference>
<dbReference type="GeneID" id="67569"/>
<dbReference type="KEGG" id="mmu:67569"/>
<dbReference type="UCSC" id="uc007gyc.2">
    <property type="organism name" value="mouse"/>
</dbReference>
<dbReference type="AGR" id="MGI:1914819"/>
<dbReference type="CTD" id="25834"/>
<dbReference type="MGI" id="MGI:1914819">
    <property type="gene designation" value="Mgat4c"/>
</dbReference>
<dbReference type="VEuPathDB" id="HostDB:ENSMUSG00000019888"/>
<dbReference type="eggNOG" id="KOG3656">
    <property type="taxonomic scope" value="Eukaryota"/>
</dbReference>
<dbReference type="GeneTree" id="ENSGT00940000155352"/>
<dbReference type="HOGENOM" id="CLU_027046_1_0_1"/>
<dbReference type="InParanoid" id="Q9D306"/>
<dbReference type="OMA" id="MTDVEHK"/>
<dbReference type="OrthoDB" id="2016523at2759"/>
<dbReference type="PhylomeDB" id="Q9D306"/>
<dbReference type="TreeFam" id="TF324570"/>
<dbReference type="Reactome" id="R-MMU-975577">
    <property type="pathway name" value="N-Glycan antennae elongation"/>
</dbReference>
<dbReference type="UniPathway" id="UPA00378"/>
<dbReference type="BioGRID-ORCS" id="67569">
    <property type="hits" value="1 hit in 78 CRISPR screens"/>
</dbReference>
<dbReference type="ChiTaRS" id="Mgat4c">
    <property type="organism name" value="mouse"/>
</dbReference>
<dbReference type="PRO" id="PR:Q9D306"/>
<dbReference type="Proteomes" id="UP000000589">
    <property type="component" value="Chromosome 10"/>
</dbReference>
<dbReference type="RNAct" id="Q9D306">
    <property type="molecule type" value="protein"/>
</dbReference>
<dbReference type="Bgee" id="ENSMUSG00000019888">
    <property type="expression patterns" value="Expressed in right colon and 58 other cell types or tissues"/>
</dbReference>
<dbReference type="ExpressionAtlas" id="Q9D306">
    <property type="expression patterns" value="baseline and differential"/>
</dbReference>
<dbReference type="GO" id="GO:0000139">
    <property type="term" value="C:Golgi membrane"/>
    <property type="evidence" value="ECO:0007669"/>
    <property type="project" value="UniProtKB-SubCell"/>
</dbReference>
<dbReference type="GO" id="GO:0008454">
    <property type="term" value="F:alpha-1,3-mannosylglycoprotein 4-beta-N-acetylglucosaminyltransferase activity"/>
    <property type="evidence" value="ECO:0007669"/>
    <property type="project" value="UniProtKB-EC"/>
</dbReference>
<dbReference type="GO" id="GO:0046872">
    <property type="term" value="F:metal ion binding"/>
    <property type="evidence" value="ECO:0007669"/>
    <property type="project" value="UniProtKB-KW"/>
</dbReference>
<dbReference type="GO" id="GO:0006486">
    <property type="term" value="P:protein glycosylation"/>
    <property type="evidence" value="ECO:0007669"/>
    <property type="project" value="UniProtKB-UniPathway"/>
</dbReference>
<dbReference type="InterPro" id="IPR006759">
    <property type="entry name" value="Glyco_transf_54"/>
</dbReference>
<dbReference type="InterPro" id="IPR056576">
    <property type="entry name" value="MGAT4_A/B/C_C"/>
</dbReference>
<dbReference type="PANTHER" id="PTHR12062:SF14">
    <property type="entry name" value="ALPHA-1,3-MANNOSYL-GLYCOPROTEIN 4-BETA-N-ACETYLGLUCOSAMINYLTRANSFERASE C"/>
    <property type="match status" value="1"/>
</dbReference>
<dbReference type="PANTHER" id="PTHR12062">
    <property type="entry name" value="N-ACETYLGLUCOSAMINYLTRANSFERASE VI"/>
    <property type="match status" value="1"/>
</dbReference>
<dbReference type="Pfam" id="PF04666">
    <property type="entry name" value="MGAT4_cons"/>
    <property type="match status" value="1"/>
</dbReference>
<dbReference type="Pfam" id="PF23524">
    <property type="entry name" value="MGAT4A_C"/>
    <property type="match status" value="1"/>
</dbReference>
<feature type="chain" id="PRO_0000288598" description="Alpha-1,3-mannosyl-glycoprotein 4-beta-N-acetylglucosaminyltransferase C">
    <location>
        <begin position="1"/>
        <end position="478"/>
    </location>
</feature>
<feature type="topological domain" description="Cytoplasmic" evidence="2">
    <location>
        <begin position="1"/>
        <end position="25"/>
    </location>
</feature>
<feature type="transmembrane region" description="Helical; Signal-anchor for type II membrane protein" evidence="2">
    <location>
        <begin position="26"/>
        <end position="43"/>
    </location>
</feature>
<feature type="topological domain" description="Lumenal" evidence="2">
    <location>
        <begin position="44"/>
        <end position="478"/>
    </location>
</feature>
<feature type="glycosylation site" description="N-linked (GlcNAc...) asparagine" evidence="2">
    <location>
        <position position="84"/>
    </location>
</feature>
<feature type="glycosylation site" description="N-linked (GlcNAc...) asparagine" evidence="2">
    <location>
        <position position="215"/>
    </location>
</feature>
<name>MGT4C_MOUSE</name>
<evidence type="ECO:0000250" key="1"/>
<evidence type="ECO:0000255" key="2"/>
<evidence type="ECO:0000305" key="3"/>
<proteinExistence type="evidence at transcript level"/>
<comment type="function">
    <text evidence="1">Glycosyltransferase that participates in the transfer of N-acetylglucosamine (GlcNAc) to the core mannose residues of N-linked glycans. Catalyzes the formation of the GlcNAcbeta1-4 branch on the GlcNAcbeta1-2Manalpha1-3 arm of the core structure of N-linked glycans. Essential for the production of tri- and tetra-antennary N-linked sugar chains. Does not catalyze the transfer of GlcNAc to the Manalpha1-6 arm to form GlcNAcBeta1-4Manalpha1-6 linkage ('GnT-VI' activity) (By similarity).</text>
</comment>
<comment type="catalytic activity">
    <reaction>
        <text>N(4)-{beta-D-GlcNAc-(1-&gt;2)-alpha-D-Man-(1-&gt;3)-[beta-D-GlcNAc-(1-&gt;2)-alpha-D-Man-(1-&gt;6)]-beta-D-Man-(1-&gt;4)-beta-D-GlcNAc-(1-&gt;4)-beta-D-GlcNAc}-L-asparaginyl-[protein] + UDP-N-acetyl-alpha-D-glucosamine = N(4)-{beta-D-GlcNAc-(1-&gt;2)-[beta-D-GlcNAc-(1-&gt;4)]-alpha-D-Man-(1-&gt;3)-[beta-D-GlcNAc-(1-&gt;2)-alpha-D-Man-(1-&gt;6)]-beta-D-Man-(1-&gt;4)-beta-D-GlcNAc-(1-&gt;4)-beta-D-GlcNAc}-L-asparaginyl-[protein] + UDP + H(+)</text>
        <dbReference type="Rhea" id="RHEA:16057"/>
        <dbReference type="Rhea" id="RHEA-COMP:13526"/>
        <dbReference type="Rhea" id="RHEA-COMP:14374"/>
        <dbReference type="ChEBI" id="CHEBI:15378"/>
        <dbReference type="ChEBI" id="CHEBI:57705"/>
        <dbReference type="ChEBI" id="CHEBI:58223"/>
        <dbReference type="ChEBI" id="CHEBI:60651"/>
        <dbReference type="ChEBI" id="CHEBI:139507"/>
        <dbReference type="EC" id="2.4.1.145"/>
    </reaction>
</comment>
<comment type="cofactor">
    <cofactor evidence="1">
        <name>a divalent metal cation</name>
        <dbReference type="ChEBI" id="CHEBI:60240"/>
    </cofactor>
</comment>
<comment type="pathway">
    <text>Protein modification; protein glycosylation.</text>
</comment>
<comment type="subcellular location">
    <subcellularLocation>
        <location evidence="1">Golgi apparatus membrane</location>
        <topology evidence="1">Single-pass type II membrane protein</topology>
    </subcellularLocation>
</comment>
<comment type="similarity">
    <text evidence="3">Belongs to the glycosyltransferase 54 family.</text>
</comment>
<gene>
    <name type="primary">Mgat4c</name>
</gene>
<protein>
    <recommendedName>
        <fullName>Alpha-1,3-mannosyl-glycoprotein 4-beta-N-acetylglucosaminyltransferase C</fullName>
        <ecNumber>2.4.1.145</ecNumber>
    </recommendedName>
    <alternativeName>
        <fullName>N-glycosyl-oligosaccharide-glycoprotein N-acetylglucosaminyltransferase IVc</fullName>
        <shortName>GnT-IVc</shortName>
        <shortName>N-acetylglucosaminyltransferase IVc</shortName>
    </alternativeName>
    <alternativeName>
        <fullName>UDP-N-acetylglucosamine: alpha-1,3-D-mannoside beta-1,4-N-acetylglucosaminyltransferase IVc</fullName>
    </alternativeName>
</protein>
<accession>Q9D306</accession>
<accession>Q9D2X2</accession>